<comment type="function">
    <text evidence="1">An essential GTPase which binds GTP, GDP and possibly (p)ppGpp with moderate affinity, with high nucleotide exchange rates and a fairly low GTP hydrolysis rate. Plays a role in control of the cell cycle, stress response, ribosome biogenesis and in those bacteria that undergo differentiation, in morphogenesis control.</text>
</comment>
<comment type="cofactor">
    <cofactor evidence="1">
        <name>Mg(2+)</name>
        <dbReference type="ChEBI" id="CHEBI:18420"/>
    </cofactor>
</comment>
<comment type="subunit">
    <text evidence="1">Monomer.</text>
</comment>
<comment type="subcellular location">
    <subcellularLocation>
        <location evidence="1">Cytoplasm</location>
    </subcellularLocation>
</comment>
<comment type="similarity">
    <text evidence="1">Belongs to the TRAFAC class OBG-HflX-like GTPase superfamily. OBG GTPase family.</text>
</comment>
<protein>
    <recommendedName>
        <fullName evidence="1">GTPase Obg</fullName>
        <ecNumber evidence="1">3.6.5.-</ecNumber>
    </recommendedName>
    <alternativeName>
        <fullName evidence="1">GTP-binding protein Obg</fullName>
    </alternativeName>
</protein>
<name>OBG_WOLTR</name>
<organism>
    <name type="scientific">Wolbachia sp. subsp. Brugia malayi (strain TRS)</name>
    <dbReference type="NCBI Taxonomy" id="292805"/>
    <lineage>
        <taxon>Bacteria</taxon>
        <taxon>Pseudomonadati</taxon>
        <taxon>Pseudomonadota</taxon>
        <taxon>Alphaproteobacteria</taxon>
        <taxon>Rickettsiales</taxon>
        <taxon>Anaplasmataceae</taxon>
        <taxon>Wolbachieae</taxon>
        <taxon>Wolbachia</taxon>
    </lineage>
</organism>
<dbReference type="EC" id="3.6.5.-" evidence="1"/>
<dbReference type="EMBL" id="AE017321">
    <property type="protein sequence ID" value="AAW70711.1"/>
    <property type="molecule type" value="Genomic_DNA"/>
</dbReference>
<dbReference type="RefSeq" id="WP_011256321.1">
    <property type="nucleotide sequence ID" value="NC_006833.1"/>
</dbReference>
<dbReference type="SMR" id="Q5GTG3"/>
<dbReference type="STRING" id="292805.Wbm0120"/>
<dbReference type="KEGG" id="wbm:Wbm0120"/>
<dbReference type="eggNOG" id="COG0536">
    <property type="taxonomic scope" value="Bacteria"/>
</dbReference>
<dbReference type="HOGENOM" id="CLU_011747_2_0_5"/>
<dbReference type="Proteomes" id="UP000000534">
    <property type="component" value="Chromosome"/>
</dbReference>
<dbReference type="GO" id="GO:0005737">
    <property type="term" value="C:cytoplasm"/>
    <property type="evidence" value="ECO:0007669"/>
    <property type="project" value="UniProtKB-SubCell"/>
</dbReference>
<dbReference type="GO" id="GO:0005525">
    <property type="term" value="F:GTP binding"/>
    <property type="evidence" value="ECO:0007669"/>
    <property type="project" value="UniProtKB-UniRule"/>
</dbReference>
<dbReference type="GO" id="GO:0003924">
    <property type="term" value="F:GTPase activity"/>
    <property type="evidence" value="ECO:0007669"/>
    <property type="project" value="UniProtKB-UniRule"/>
</dbReference>
<dbReference type="GO" id="GO:0000287">
    <property type="term" value="F:magnesium ion binding"/>
    <property type="evidence" value="ECO:0007669"/>
    <property type="project" value="InterPro"/>
</dbReference>
<dbReference type="GO" id="GO:0042254">
    <property type="term" value="P:ribosome biogenesis"/>
    <property type="evidence" value="ECO:0007669"/>
    <property type="project" value="UniProtKB-UniRule"/>
</dbReference>
<dbReference type="CDD" id="cd01898">
    <property type="entry name" value="Obg"/>
    <property type="match status" value="1"/>
</dbReference>
<dbReference type="FunFam" id="2.70.210.12:FF:000001">
    <property type="entry name" value="GTPase Obg"/>
    <property type="match status" value="1"/>
</dbReference>
<dbReference type="Gene3D" id="2.70.210.12">
    <property type="entry name" value="GTP1/OBG domain"/>
    <property type="match status" value="1"/>
</dbReference>
<dbReference type="Gene3D" id="3.40.50.300">
    <property type="entry name" value="P-loop containing nucleotide triphosphate hydrolases"/>
    <property type="match status" value="1"/>
</dbReference>
<dbReference type="HAMAP" id="MF_01454">
    <property type="entry name" value="GTPase_Obg"/>
    <property type="match status" value="1"/>
</dbReference>
<dbReference type="InterPro" id="IPR031167">
    <property type="entry name" value="G_OBG"/>
</dbReference>
<dbReference type="InterPro" id="IPR006073">
    <property type="entry name" value="GTP-bd"/>
</dbReference>
<dbReference type="InterPro" id="IPR014100">
    <property type="entry name" value="GTP-bd_Obg/CgtA"/>
</dbReference>
<dbReference type="InterPro" id="IPR006169">
    <property type="entry name" value="GTP1_OBG_dom"/>
</dbReference>
<dbReference type="InterPro" id="IPR036726">
    <property type="entry name" value="GTP1_OBG_dom_sf"/>
</dbReference>
<dbReference type="InterPro" id="IPR045086">
    <property type="entry name" value="OBG_GTPase"/>
</dbReference>
<dbReference type="InterPro" id="IPR027417">
    <property type="entry name" value="P-loop_NTPase"/>
</dbReference>
<dbReference type="NCBIfam" id="TIGR02729">
    <property type="entry name" value="Obg_CgtA"/>
    <property type="match status" value="1"/>
</dbReference>
<dbReference type="NCBIfam" id="NF008955">
    <property type="entry name" value="PRK12297.1"/>
    <property type="match status" value="1"/>
</dbReference>
<dbReference type="NCBIfam" id="NF008956">
    <property type="entry name" value="PRK12299.1"/>
    <property type="match status" value="1"/>
</dbReference>
<dbReference type="PANTHER" id="PTHR11702">
    <property type="entry name" value="DEVELOPMENTALLY REGULATED GTP-BINDING PROTEIN-RELATED"/>
    <property type="match status" value="1"/>
</dbReference>
<dbReference type="PANTHER" id="PTHR11702:SF31">
    <property type="entry name" value="MITOCHONDRIAL RIBOSOME-ASSOCIATED GTPASE 2"/>
    <property type="match status" value="1"/>
</dbReference>
<dbReference type="Pfam" id="PF01018">
    <property type="entry name" value="GTP1_OBG"/>
    <property type="match status" value="1"/>
</dbReference>
<dbReference type="Pfam" id="PF01926">
    <property type="entry name" value="MMR_HSR1"/>
    <property type="match status" value="1"/>
</dbReference>
<dbReference type="PIRSF" id="PIRSF002401">
    <property type="entry name" value="GTP_bd_Obg/CgtA"/>
    <property type="match status" value="1"/>
</dbReference>
<dbReference type="PRINTS" id="PR00326">
    <property type="entry name" value="GTP1OBG"/>
</dbReference>
<dbReference type="SUPFAM" id="SSF82051">
    <property type="entry name" value="Obg GTP-binding protein N-terminal domain"/>
    <property type="match status" value="1"/>
</dbReference>
<dbReference type="SUPFAM" id="SSF52540">
    <property type="entry name" value="P-loop containing nucleoside triphosphate hydrolases"/>
    <property type="match status" value="1"/>
</dbReference>
<dbReference type="PROSITE" id="PS51710">
    <property type="entry name" value="G_OBG"/>
    <property type="match status" value="1"/>
</dbReference>
<dbReference type="PROSITE" id="PS51883">
    <property type="entry name" value="OBG"/>
    <property type="match status" value="1"/>
</dbReference>
<sequence length="340" mass="37547">MDFIDEVKLYLKAGDGGDGCVSFRREKFVEFGGPNGGNGGKGGNIVFVSDANLNTLLNFRYRRHVKAGSGKSGASRDRSGTAGKNIVLKVPVGTQIIDEESEKIILDFNKPDMEFLIAQGGKGGLGNTNFKSSINRAPRHFTCGQFGEEKYVVLKLKVLSDVGIIGMPNAGKSKFLTRCSNADTKVGDYPFTTIKPHLGVAKVDNSEVVIVDIPGIITDAHLGIGLGHKFLKHVERCKILLHLIDVTHDNVVSAYNCMRNELELYNSDLVKKEEIIVLNKCDLLRKVEIFEKKNHLANYLNKEVLCLSIGEDLQPILRLLNEKLKKGSSKKVDVYDPFKR</sequence>
<reference key="1">
    <citation type="journal article" date="2005" name="PLoS Biol.">
        <title>The Wolbachia genome of Brugia malayi: endosymbiont evolution within a human pathogenic nematode.</title>
        <authorList>
            <person name="Foster J."/>
            <person name="Ganatra M."/>
            <person name="Kamal I."/>
            <person name="Ware J."/>
            <person name="Makarova K."/>
            <person name="Ivanova N."/>
            <person name="Bhattacharyya A."/>
            <person name="Kapatral V."/>
            <person name="Kumar S."/>
            <person name="Posfai J."/>
            <person name="Vincze T."/>
            <person name="Ingram J."/>
            <person name="Moran L."/>
            <person name="Lapidus A."/>
            <person name="Omelchenko M."/>
            <person name="Kyrpides N."/>
            <person name="Ghedin E."/>
            <person name="Wang S."/>
            <person name="Goltsman E."/>
            <person name="Joukov V."/>
            <person name="Ostrovskaya O."/>
            <person name="Tsukerman K."/>
            <person name="Mazur M."/>
            <person name="Comb D."/>
            <person name="Koonin E."/>
            <person name="Slatko B."/>
        </authorList>
    </citation>
    <scope>NUCLEOTIDE SEQUENCE [LARGE SCALE GENOMIC DNA]</scope>
    <source>
        <strain>TRS</strain>
    </source>
</reference>
<proteinExistence type="inferred from homology"/>
<evidence type="ECO:0000255" key="1">
    <source>
        <dbReference type="HAMAP-Rule" id="MF_01454"/>
    </source>
</evidence>
<evidence type="ECO:0000255" key="2">
    <source>
        <dbReference type="PROSITE-ProRule" id="PRU01231"/>
    </source>
</evidence>
<gene>
    <name evidence="1" type="primary">obg</name>
    <name type="ordered locus">Wbm0120</name>
</gene>
<keyword id="KW-0963">Cytoplasm</keyword>
<keyword id="KW-0342">GTP-binding</keyword>
<keyword id="KW-0378">Hydrolase</keyword>
<keyword id="KW-0460">Magnesium</keyword>
<keyword id="KW-0479">Metal-binding</keyword>
<keyword id="KW-0547">Nucleotide-binding</keyword>
<keyword id="KW-1185">Reference proteome</keyword>
<feature type="chain" id="PRO_0000386389" description="GTPase Obg">
    <location>
        <begin position="1"/>
        <end position="340"/>
    </location>
</feature>
<feature type="domain" description="Obg" evidence="2">
    <location>
        <begin position="1"/>
        <end position="159"/>
    </location>
</feature>
<feature type="domain" description="OBG-type G" evidence="1">
    <location>
        <begin position="160"/>
        <end position="329"/>
    </location>
</feature>
<feature type="binding site" evidence="1">
    <location>
        <begin position="166"/>
        <end position="173"/>
    </location>
    <ligand>
        <name>GTP</name>
        <dbReference type="ChEBI" id="CHEBI:37565"/>
    </ligand>
</feature>
<feature type="binding site" evidence="1">
    <location>
        <position position="173"/>
    </location>
    <ligand>
        <name>Mg(2+)</name>
        <dbReference type="ChEBI" id="CHEBI:18420"/>
    </ligand>
</feature>
<feature type="binding site" evidence="1">
    <location>
        <begin position="191"/>
        <end position="195"/>
    </location>
    <ligand>
        <name>GTP</name>
        <dbReference type="ChEBI" id="CHEBI:37565"/>
    </ligand>
</feature>
<feature type="binding site" evidence="1">
    <location>
        <position position="193"/>
    </location>
    <ligand>
        <name>Mg(2+)</name>
        <dbReference type="ChEBI" id="CHEBI:18420"/>
    </ligand>
</feature>
<feature type="binding site" evidence="1">
    <location>
        <begin position="212"/>
        <end position="215"/>
    </location>
    <ligand>
        <name>GTP</name>
        <dbReference type="ChEBI" id="CHEBI:37565"/>
    </ligand>
</feature>
<feature type="binding site" evidence="1">
    <location>
        <begin position="279"/>
        <end position="282"/>
    </location>
    <ligand>
        <name>GTP</name>
        <dbReference type="ChEBI" id="CHEBI:37565"/>
    </ligand>
</feature>
<feature type="binding site" evidence="1">
    <location>
        <begin position="310"/>
        <end position="312"/>
    </location>
    <ligand>
        <name>GTP</name>
        <dbReference type="ChEBI" id="CHEBI:37565"/>
    </ligand>
</feature>
<accession>Q5GTG3</accession>